<organism>
    <name type="scientific">Tityus obscurus</name>
    <name type="common">Amazonian scorpion</name>
    <name type="synonym">Tityus cambridgei</name>
    <dbReference type="NCBI Taxonomy" id="1221240"/>
    <lineage>
        <taxon>Eukaryota</taxon>
        <taxon>Metazoa</taxon>
        <taxon>Ecdysozoa</taxon>
        <taxon>Arthropoda</taxon>
        <taxon>Chelicerata</taxon>
        <taxon>Arachnida</taxon>
        <taxon>Scorpiones</taxon>
        <taxon>Buthida</taxon>
        <taxon>Buthoidea</taxon>
        <taxon>Buthidae</taxon>
        <taxon>Tityus</taxon>
    </lineage>
</organism>
<protein>
    <recommendedName>
        <fullName>Toxin To33</fullName>
    </recommendedName>
    <alternativeName>
        <fullName>Toxin Tc33</fullName>
    </alternativeName>
</protein>
<name>SC33_TITOB</name>
<accession>P84679</accession>
<feature type="chain" id="PRO_0000066801" description="Toxin To33">
    <location>
        <begin position="1"/>
        <end position="10" status="greater than"/>
    </location>
</feature>
<feature type="non-terminal residue" evidence="2">
    <location>
        <position position="10"/>
    </location>
</feature>
<proteinExistence type="evidence at protein level"/>
<sequence>ILNRCCNDDN</sequence>
<comment type="subcellular location">
    <subcellularLocation>
        <location evidence="1">Secreted</location>
    </subcellularLocation>
</comment>
<comment type="tissue specificity">
    <text evidence="1">Expressed by the venom gland.</text>
</comment>
<comment type="mass spectrometry"/>
<keyword id="KW-0903">Direct protein sequencing</keyword>
<keyword id="KW-0964">Secreted</keyword>
<keyword id="KW-0800">Toxin</keyword>
<reference evidence="3" key="1">
    <citation type="journal article" date="2004" name="J. Chromatogr. B">
        <title>Proteomics of the venom from the Amazonian scorpion Tityus cambridgei and the role of prolines on mass spectrometry analysis of toxins.</title>
        <authorList>
            <person name="Batista C.V.F."/>
            <person name="del Pozo L."/>
            <person name="Zamudio F.Z."/>
            <person name="Contreras S."/>
            <person name="Becerril B."/>
            <person name="Wanke E."/>
            <person name="Possani L.D."/>
        </authorList>
    </citation>
    <scope>PROTEIN SEQUENCE</scope>
    <scope>SUBCELLULAR LOCATION</scope>
    <scope>TISSUE SPECIFICITY</scope>
    <scope>MASS SPECTROMETRY</scope>
    <source>
        <tissue evidence="1">Venom</tissue>
    </source>
</reference>
<evidence type="ECO:0000269" key="1">
    <source>
    </source>
</evidence>
<evidence type="ECO:0000303" key="2">
    <source>
    </source>
</evidence>
<evidence type="ECO:0000305" key="3"/>
<dbReference type="GO" id="GO:0005576">
    <property type="term" value="C:extracellular region"/>
    <property type="evidence" value="ECO:0007005"/>
    <property type="project" value="UniProtKB"/>
</dbReference>
<dbReference type="GO" id="GO:0090729">
    <property type="term" value="F:toxin activity"/>
    <property type="evidence" value="ECO:0007669"/>
    <property type="project" value="UniProtKB-KW"/>
</dbReference>